<feature type="chain" id="PRO_0000123564" description="Isoprenyl transferase">
    <location>
        <begin position="1"/>
        <end position="231"/>
    </location>
</feature>
<feature type="active site" evidence="1">
    <location>
        <position position="14"/>
    </location>
</feature>
<feature type="active site" description="Proton acceptor" evidence="1">
    <location>
        <position position="62"/>
    </location>
</feature>
<feature type="binding site" evidence="1">
    <location>
        <position position="14"/>
    </location>
    <ligand>
        <name>Mg(2+)</name>
        <dbReference type="ChEBI" id="CHEBI:18420"/>
    </ligand>
</feature>
<feature type="binding site" evidence="1">
    <location>
        <begin position="15"/>
        <end position="18"/>
    </location>
    <ligand>
        <name>substrate</name>
    </ligand>
</feature>
<feature type="binding site" evidence="1">
    <location>
        <position position="19"/>
    </location>
    <ligand>
        <name>substrate</name>
    </ligand>
</feature>
<feature type="binding site" evidence="1">
    <location>
        <position position="27"/>
    </location>
    <ligand>
        <name>substrate</name>
    </ligand>
</feature>
<feature type="binding site" evidence="1">
    <location>
        <position position="31"/>
    </location>
    <ligand>
        <name>substrate</name>
    </ligand>
</feature>
<feature type="binding site" evidence="1">
    <location>
        <begin position="59"/>
        <end position="61"/>
    </location>
    <ligand>
        <name>substrate</name>
    </ligand>
</feature>
<feature type="binding site" evidence="1">
    <location>
        <position position="63"/>
    </location>
    <ligand>
        <name>substrate</name>
    </ligand>
</feature>
<feature type="binding site" evidence="1">
    <location>
        <position position="65"/>
    </location>
    <ligand>
        <name>substrate</name>
    </ligand>
</feature>
<feature type="binding site" evidence="1">
    <location>
        <position position="176"/>
    </location>
    <ligand>
        <name>substrate</name>
    </ligand>
</feature>
<feature type="binding site" evidence="1">
    <location>
        <begin position="182"/>
        <end position="184"/>
    </location>
    <ligand>
        <name>substrate</name>
    </ligand>
</feature>
<feature type="binding site" evidence="1">
    <location>
        <position position="195"/>
    </location>
    <ligand>
        <name>Mg(2+)</name>
        <dbReference type="ChEBI" id="CHEBI:18420"/>
    </ligand>
</feature>
<comment type="function">
    <text evidence="1">Catalyzes the condensation of isopentenyl diphosphate (IPP) with allylic pyrophosphates generating different type of terpenoids.</text>
</comment>
<comment type="cofactor">
    <cofactor evidence="1">
        <name>Mg(2+)</name>
        <dbReference type="ChEBI" id="CHEBI:18420"/>
    </cofactor>
    <text evidence="1">Binds 2 magnesium ions per subunit.</text>
</comment>
<comment type="subunit">
    <text evidence="1">Homodimer.</text>
</comment>
<comment type="similarity">
    <text evidence="1">Belongs to the UPP synthase family.</text>
</comment>
<keyword id="KW-0460">Magnesium</keyword>
<keyword id="KW-0479">Metal-binding</keyword>
<keyword id="KW-1185">Reference proteome</keyword>
<keyword id="KW-0808">Transferase</keyword>
<sequence length="231" mass="27148">MSLKLPEHVAIIMDGNGRWARQRGLPRVAGHYRGAEVAEDIIEYCIELGIKHLTLFAFSTENWNRPKEEVKALFELMENYIRSKREKLYSLGVRVRLIGRRDRLSRGLVNLMEELESDSKDFKNLFLNVAIDYGGRDDILRAVKKIMEVQPSKLDEETFSQFLDLSCSPDPDLLIRTAGEKRISNFLLWNLAYTELYFTDTLWPDFTREEFMKALEDYSRRKRKFGRVLDE</sequence>
<protein>
    <recommendedName>
        <fullName evidence="1">Isoprenyl transferase</fullName>
        <ecNumber evidence="1">2.5.1.-</ecNumber>
    </recommendedName>
</protein>
<proteinExistence type="inferred from homology"/>
<accession>O67291</accession>
<name>ISPT_AQUAE</name>
<evidence type="ECO:0000255" key="1">
    <source>
        <dbReference type="HAMAP-Rule" id="MF_01139"/>
    </source>
</evidence>
<organism>
    <name type="scientific">Aquifex aeolicus (strain VF5)</name>
    <dbReference type="NCBI Taxonomy" id="224324"/>
    <lineage>
        <taxon>Bacteria</taxon>
        <taxon>Pseudomonadati</taxon>
        <taxon>Aquificota</taxon>
        <taxon>Aquificia</taxon>
        <taxon>Aquificales</taxon>
        <taxon>Aquificaceae</taxon>
        <taxon>Aquifex</taxon>
    </lineage>
</organism>
<dbReference type="EC" id="2.5.1.-" evidence="1"/>
<dbReference type="EMBL" id="AE000657">
    <property type="protein sequence ID" value="AAC07254.1"/>
    <property type="molecule type" value="Genomic_DNA"/>
</dbReference>
<dbReference type="PIR" id="H70407">
    <property type="entry name" value="H70407"/>
</dbReference>
<dbReference type="RefSeq" id="NP_213855.1">
    <property type="nucleotide sequence ID" value="NC_000918.1"/>
</dbReference>
<dbReference type="RefSeq" id="WP_010880793.1">
    <property type="nucleotide sequence ID" value="NC_000918.1"/>
</dbReference>
<dbReference type="SMR" id="O67291"/>
<dbReference type="FunCoup" id="O67291">
    <property type="interactions" value="416"/>
</dbReference>
<dbReference type="STRING" id="224324.aq_1248"/>
<dbReference type="EnsemblBacteria" id="AAC07254">
    <property type="protein sequence ID" value="AAC07254"/>
    <property type="gene ID" value="aq_1248"/>
</dbReference>
<dbReference type="KEGG" id="aae:aq_1248"/>
<dbReference type="PATRIC" id="fig|224324.8.peg.972"/>
<dbReference type="eggNOG" id="COG0020">
    <property type="taxonomic scope" value="Bacteria"/>
</dbReference>
<dbReference type="HOGENOM" id="CLU_038505_1_1_0"/>
<dbReference type="InParanoid" id="O67291"/>
<dbReference type="OrthoDB" id="4191603at2"/>
<dbReference type="Proteomes" id="UP000000798">
    <property type="component" value="Chromosome"/>
</dbReference>
<dbReference type="GO" id="GO:0000287">
    <property type="term" value="F:magnesium ion binding"/>
    <property type="evidence" value="ECO:0007669"/>
    <property type="project" value="UniProtKB-UniRule"/>
</dbReference>
<dbReference type="GO" id="GO:0004659">
    <property type="term" value="F:prenyltransferase activity"/>
    <property type="evidence" value="ECO:0007669"/>
    <property type="project" value="UniProtKB-UniRule"/>
</dbReference>
<dbReference type="GO" id="GO:0016094">
    <property type="term" value="P:polyprenol biosynthetic process"/>
    <property type="evidence" value="ECO:0000318"/>
    <property type="project" value="GO_Central"/>
</dbReference>
<dbReference type="CDD" id="cd00475">
    <property type="entry name" value="Cis_IPPS"/>
    <property type="match status" value="1"/>
</dbReference>
<dbReference type="FunFam" id="3.40.1180.10:FF:000001">
    <property type="entry name" value="(2E,6E)-farnesyl-diphosphate-specific ditrans,polycis-undecaprenyl-diphosphate synthase"/>
    <property type="match status" value="1"/>
</dbReference>
<dbReference type="Gene3D" id="3.40.1180.10">
    <property type="entry name" value="Decaprenyl diphosphate synthase-like"/>
    <property type="match status" value="1"/>
</dbReference>
<dbReference type="HAMAP" id="MF_01139">
    <property type="entry name" value="ISPT"/>
    <property type="match status" value="1"/>
</dbReference>
<dbReference type="InterPro" id="IPR001441">
    <property type="entry name" value="UPP_synth-like"/>
</dbReference>
<dbReference type="InterPro" id="IPR018520">
    <property type="entry name" value="UPP_synth-like_CS"/>
</dbReference>
<dbReference type="InterPro" id="IPR036424">
    <property type="entry name" value="UPP_synth-like_sf"/>
</dbReference>
<dbReference type="NCBIfam" id="TIGR00055">
    <property type="entry name" value="uppS"/>
    <property type="match status" value="1"/>
</dbReference>
<dbReference type="PANTHER" id="PTHR10291:SF0">
    <property type="entry name" value="DEHYDRODOLICHYL DIPHOSPHATE SYNTHASE 2"/>
    <property type="match status" value="1"/>
</dbReference>
<dbReference type="PANTHER" id="PTHR10291">
    <property type="entry name" value="DEHYDRODOLICHYL DIPHOSPHATE SYNTHASE FAMILY MEMBER"/>
    <property type="match status" value="1"/>
</dbReference>
<dbReference type="Pfam" id="PF01255">
    <property type="entry name" value="Prenyltransf"/>
    <property type="match status" value="1"/>
</dbReference>
<dbReference type="SUPFAM" id="SSF64005">
    <property type="entry name" value="Undecaprenyl diphosphate synthase"/>
    <property type="match status" value="1"/>
</dbReference>
<dbReference type="PROSITE" id="PS01066">
    <property type="entry name" value="UPP_SYNTHASE"/>
    <property type="match status" value="1"/>
</dbReference>
<reference key="1">
    <citation type="journal article" date="1998" name="Nature">
        <title>The complete genome of the hyperthermophilic bacterium Aquifex aeolicus.</title>
        <authorList>
            <person name="Deckert G."/>
            <person name="Warren P.V."/>
            <person name="Gaasterland T."/>
            <person name="Young W.G."/>
            <person name="Lenox A.L."/>
            <person name="Graham D.E."/>
            <person name="Overbeek R."/>
            <person name="Snead M.A."/>
            <person name="Keller M."/>
            <person name="Aujay M."/>
            <person name="Huber R."/>
            <person name="Feldman R.A."/>
            <person name="Short J.M."/>
            <person name="Olsen G.J."/>
            <person name="Swanson R.V."/>
        </authorList>
    </citation>
    <scope>NUCLEOTIDE SEQUENCE [LARGE SCALE GENOMIC DNA]</scope>
    <source>
        <strain>VF5</strain>
    </source>
</reference>
<gene>
    <name evidence="1" type="primary">uppS</name>
    <name type="ordered locus">aq_1248</name>
</gene>